<evidence type="ECO:0000250" key="1"/>
<evidence type="ECO:0000250" key="2">
    <source>
        <dbReference type="UniProtKB" id="P35568"/>
    </source>
</evidence>
<evidence type="ECO:0000250" key="3">
    <source>
        <dbReference type="UniProtKB" id="P35570"/>
    </source>
</evidence>
<evidence type="ECO:0000255" key="4">
    <source>
        <dbReference type="PROSITE-ProRule" id="PRU00145"/>
    </source>
</evidence>
<evidence type="ECO:0000255" key="5">
    <source>
        <dbReference type="PROSITE-ProRule" id="PRU00389"/>
    </source>
</evidence>
<evidence type="ECO:0000256" key="6">
    <source>
        <dbReference type="SAM" id="MobiDB-lite"/>
    </source>
</evidence>
<evidence type="ECO:0000269" key="7">
    <source>
    </source>
</evidence>
<evidence type="ECO:0000269" key="8">
    <source>
    </source>
</evidence>
<evidence type="ECO:0000269" key="9">
    <source>
    </source>
</evidence>
<evidence type="ECO:0000269" key="10">
    <source>
    </source>
</evidence>
<evidence type="ECO:0000269" key="11">
    <source>
    </source>
</evidence>
<evidence type="ECO:0000269" key="12">
    <source>
    </source>
</evidence>
<evidence type="ECO:0000269" key="13">
    <source>
    </source>
</evidence>
<evidence type="ECO:0000269" key="14">
    <source>
    </source>
</evidence>
<evidence type="ECO:0000269" key="15">
    <source>
    </source>
</evidence>
<evidence type="ECO:0000269" key="16">
    <source>
    </source>
</evidence>
<evidence type="ECO:0000269" key="17">
    <source>
    </source>
</evidence>
<evidence type="ECO:0000269" key="18">
    <source>
    </source>
</evidence>
<evidence type="ECO:0000305" key="19"/>
<evidence type="ECO:0000305" key="20">
    <source>
    </source>
</evidence>
<evidence type="ECO:0007744" key="21">
    <source>
    </source>
</evidence>
<evidence type="ECO:0007744" key="22">
    <source>
    </source>
</evidence>
<sequence>MASPPDTDGFSDVRKVGYLRKPKSMHKRFFVLRAASEAGGPARLEYYENEKKWRHKSSAPKRSIPLESCFNINKRADSKNKHLVALYTRDEHFAIAADSEAEQDSWYQALLQLHNRAKAHHDGAGGGCGGSCSGSSGVGEAGEDLSYDTGPGPAFKEVWQVILKPKGLGQTKNLIGIYRLCLTSKTISFVKLNSEAAAVVLQLMNIRRCGHSENFFFIEVGRSAVTGPGEFWMQVDDSVVAQNMHETILEAMRAMSDEFRPRSKSQSSSSCSNPISVPLRRHHLNNPPPSQVGLTRRSRTESITATSPASMVGGKPGSFRVRASSDGEGTMSRPASVDGSPVSPSTNRTHAHRHRGSSRLHPPLNHSRSIPMPSSRCSPSATSPVSLSSSSTSGHGSTSDCLFPRRSSASVSGSPSDGGFISSDEYGSSPCDFRSSFRSVTPDSLGHTPPARGEEELSNYICMGGKGASTLAAPNGHYILSRGGNGHRYIPGANLGTSPALPGDEAAGAADLDNRFRKRTHSAGTSPTISHQKTPSQSSVASIEEYTEMMPAAYPPGGGSGGRLPGYRHSAFVPTHSYPEEGLEMHHLERRGGHHRPDTSNLHTDDGYMPMSPGVAPVPSNRKGNGDYMPMSPKSVSAPQQIINPIRRHPQRVDPNGYMMMSPSGSCSPDIGGGSSSSSSISAAPSGSSYGKPWTNGVGGHHTHALPHAKPPVESGGGKLLPCTGDYMNMSPVGDSNTSSPSECYYGPEDPQHKPVLSYYSLPRSFKHTQRPGEPEEGARHQHLRLSSSSGRLRYTATAEDSSSSTSSDSLGGGYCGARPESSLTHPHHHVLQPHLPRKVDTAAQTNSRLARPTRLSLGDPKASTLPRVREQQQQQQSSLHPPEPKSPGEYVNIEFGSGQPGYLAGPATSRSSPSVRCPPQLHPAPREETGSEEYMNMDLGPGRRATWQESGGVELGRIGPAPPGSATVCRPTRSVPNSRGDYMTMQIGCPRQSYVDTSPVAPVSYADMRTGIAAEKASLPRPTGAAPPPSSTASSSASVTPQGATAEQATHSSLLGGPQGPGGMSAFTRVNLSPNHNQSAKVIRADTQGCRRRHSSETFSAPTRAGNTVPFGAGAAVGGSGGGGGGGSEDVKRHSSASFENVWLRPGDLGGVSKESAPVCGAAGGLEKSLNYIDLDLAKEHSQDCPSQQQSLPPPPPHQPLGSNEGNSPRRSSEDLSNYASISFQKQPEDRQ</sequence>
<accession>P35569</accession>
<reference key="1">
    <citation type="journal article" date="1994" name="Biochim. Biophys. Acta">
        <title>Cloning of the mouse insulin receptor substrate-1 (IRS-1) gene and complete sequence of mouse IRS-1.</title>
        <authorList>
            <person name="Araki E."/>
            <person name="Haag B.L. III"/>
            <person name="Kahn C.R."/>
        </authorList>
    </citation>
    <scope>NUCLEOTIDE SEQUENCE [MRNA]</scope>
</reference>
<reference key="2">
    <citation type="journal article" date="1993" name="Biochim. Biophys. Acta">
        <title>The insulin-elicited 160 kDa phosphotyrosine protein in mouse adipocytes is an insulin receptor substrate 1: identification by cloning.</title>
        <authorList>
            <person name="Keller S.R."/>
            <person name="Aebersold R."/>
            <person name="Garner C.W."/>
            <person name="Lienhard G.E."/>
        </authorList>
    </citation>
    <scope>NUCLEOTIDE SEQUENCE [MRNA]</scope>
</reference>
<reference key="3">
    <citation type="journal article" date="1994" name="Nature">
        <title>Alternative pathway of insulin signalling in mice with targeted disruption of the IRS-1 gene.</title>
        <authorList>
            <person name="Araki E."/>
            <person name="Lipes M.A."/>
            <person name="Patti M.E."/>
            <person name="Bruening J.C."/>
            <person name="Haag B. III"/>
            <person name="Johnson R.S."/>
            <person name="Kahn C.R."/>
        </authorList>
    </citation>
    <scope>FUNCTION</scope>
    <scope>DISRUPTION PHENOTYPE</scope>
</reference>
<reference key="4">
    <citation type="journal article" date="2000" name="J. Biol. Chem.">
        <title>The protein-tyrosine kinase fer associates with signaling complexes containing insulin receptor substrate-1 and phosphatidylinositol 3-kinase.</title>
        <authorList>
            <person name="Iwanishi M."/>
            <person name="Czech M.P."/>
            <person name="Cherniack A.D."/>
        </authorList>
    </citation>
    <scope>INTERACTION WITH FER</scope>
</reference>
<reference key="5">
    <citation type="journal article" date="2000" name="J. Biol. Chem.">
        <title>Cloning and characterization of PHIP, a novel insulin receptor substrate-1 pleckstrin homology domain interacting protein.</title>
        <authorList>
            <person name="Farhang-Fallah J."/>
            <person name="Yin X."/>
            <person name="Trentin G."/>
            <person name="Cheng A.M."/>
            <person name="Rozakis-Adcock M."/>
        </authorList>
    </citation>
    <scope>INTERACTION WITH PHIP</scope>
</reference>
<reference key="6">
    <citation type="journal article" date="2000" name="J. Clin. Invest.">
        <title>Insulin receptor substrate-1 in osteoblast is indispensable for maintaining bone turnover.</title>
        <authorList>
            <person name="Ogata N."/>
            <person name="Chikazu D."/>
            <person name="Kubota N."/>
            <person name="Terauchi Y."/>
            <person name="Tobe K."/>
            <person name="Azuma Y."/>
            <person name="Ohta T."/>
            <person name="Kadowaki T."/>
            <person name="Nakamura K."/>
            <person name="Kawaguchi H."/>
        </authorList>
    </citation>
    <scope>TISSUE SPECIFICITY</scope>
</reference>
<reference key="7">
    <citation type="journal article" date="2001" name="J. Biol. Chem.">
        <title>5'-AMP-activated protein kinase phosphorylates IRS-1 on Ser-789 in mouse C2C12 myotubes in response to 5-aminoimidazole-4-carboxamide riboside.</title>
        <authorList>
            <person name="Jakobsen S.N."/>
            <person name="Hardie D.G."/>
            <person name="Morrice N."/>
            <person name="Tornqvist H.E."/>
        </authorList>
    </citation>
    <scope>PHOSPHORYLATION AT SER-789</scope>
</reference>
<reference key="8">
    <citation type="journal article" date="2004" name="Proc. Natl. Acad. Sci. U.S.A.">
        <title>Control of cell size through phosphorylation of upstream binding factor 1 by nuclear phosphatidylinositol 3-kinase.</title>
        <authorList>
            <person name="Drakas R."/>
            <person name="Tu X."/>
            <person name="Baserga R."/>
        </authorList>
    </citation>
    <scope>INTERACTION WITH UBTF AND PIK3CA</scope>
    <scope>EFFECT ON CELL AND BODY SIZE</scope>
</reference>
<reference key="9">
    <citation type="journal article" date="2004" name="J. Biol. Chem.">
        <title>SH2-B promotes insulin receptor substrate 1 (IRS1)- and IRS2-mediated activation of the phosphatidylinositol 3-kinase pathway in response to leptin.</title>
        <authorList>
            <person name="Duan C."/>
            <person name="Li M."/>
            <person name="Rui L."/>
        </authorList>
    </citation>
    <scope>FUNCTION</scope>
    <scope>INTERACTION WITH SH2B1 AND JAK1</scope>
</reference>
<reference key="10">
    <citation type="journal article" date="2005" name="Cell Metab.">
        <title>Role of Rho-kinase in regulation of insulin action and glucose homeostasis.</title>
        <authorList>
            <person name="Furukawa N."/>
            <person name="Ongusaha P."/>
            <person name="Jahng W.J."/>
            <person name="Araki K."/>
            <person name="Choi C.S."/>
            <person name="Kim H.J."/>
            <person name="Lee Y.H."/>
            <person name="Kaibuchi K."/>
            <person name="Kahn B.B."/>
            <person name="Masuzaki H."/>
            <person name="Kim J.K."/>
            <person name="Lee S.W."/>
            <person name="Kim Y.B."/>
        </authorList>
    </citation>
    <scope>PHOSPHORYLATION AT SER-632</scope>
</reference>
<reference key="11">
    <citation type="journal article" date="2007" name="Proc. Natl. Acad. Sci. U.S.A.">
        <title>Large-scale phosphorylation analysis of mouse liver.</title>
        <authorList>
            <person name="Villen J."/>
            <person name="Beausoleil S.A."/>
            <person name="Gerber S.A."/>
            <person name="Gygi S.P."/>
        </authorList>
    </citation>
    <scope>PHOSPHORYLATION [LARGE SCALE ANALYSIS] AT SER-340 AND SER-1097</scope>
    <scope>IDENTIFICATION BY MASS SPECTROMETRY [LARGE SCALE ANALYSIS]</scope>
    <source>
        <tissue>Liver</tissue>
    </source>
</reference>
<reference key="12">
    <citation type="journal article" date="2010" name="Cell">
        <title>A tissue-specific atlas of mouse protein phosphorylation and expression.</title>
        <authorList>
            <person name="Huttlin E.L."/>
            <person name="Jedrychowski M.P."/>
            <person name="Elias J.E."/>
            <person name="Goswami T."/>
            <person name="Rad R."/>
            <person name="Beausoleil S.A."/>
            <person name="Villen J."/>
            <person name="Haas W."/>
            <person name="Sowa M.E."/>
            <person name="Gygi S.P."/>
        </authorList>
    </citation>
    <scope>PHOSPHORYLATION [LARGE SCALE ANALYSIS] AT SER-325; SER-414; SER-887; SER-1096 AND SER-1097</scope>
    <scope>IDENTIFICATION BY MASS SPECTROMETRY [LARGE SCALE ANALYSIS]</scope>
    <source>
        <tissue>Brain</tissue>
        <tissue>Brown adipose tissue</tissue>
        <tissue>Heart</tissue>
        <tissue>Kidney</tissue>
        <tissue>Liver</tissue>
        <tissue>Lung</tissue>
        <tissue>Spleen</tissue>
    </source>
</reference>
<reference key="13">
    <citation type="journal article" date="2012" name="Endocrinology">
        <title>Double-stranded RNA-activated protein kinase is a key modulator of insulin sensitivity in physiological conditions and in obesity in mice.</title>
        <authorList>
            <person name="Carvalho-Filho M.A."/>
            <person name="Carvalho B.M."/>
            <person name="Oliveira A.G."/>
            <person name="Guadagnini D."/>
            <person name="Ueno M."/>
            <person name="Dias M.M."/>
            <person name="Tsukumo D.M."/>
            <person name="Hirabara S.M."/>
            <person name="Reis L.F."/>
            <person name="Curi R."/>
            <person name="Carvalheira J.B."/>
            <person name="Saad M.J."/>
        </authorList>
    </citation>
    <scope>INTERACTION WITH EIF2AK2</scope>
</reference>
<reference key="14">
    <citation type="journal article" date="2012" name="Mol. Cell">
        <title>mTOR complex 2 regulates proper turnover of insulin receptor substrate-1 via the ubiquitin ligase subunit Fbw8.</title>
        <authorList>
            <person name="Kim S.J."/>
            <person name="DeStefano M.A."/>
            <person name="Oh W.J."/>
            <person name="Wu C.C."/>
            <person name="Vega-Cotto N.M."/>
            <person name="Finlan M."/>
            <person name="Liu D."/>
            <person name="Su B."/>
            <person name="Jacinto E."/>
        </authorList>
    </citation>
    <scope>UBIQUITINATION</scope>
</reference>
<reference key="15">
    <citation type="journal article" date="2013" name="J. Biol. Chem.">
        <title>Skeletal muscle-derived myonectin activates the mammalian target of rapamycin (mTOR) pathway to suppress autophagy in liver.</title>
        <authorList>
            <person name="Seldin M.M."/>
            <person name="Lei X."/>
            <person name="Tan S.Y."/>
            <person name="Stanson K.P."/>
            <person name="Wei Z."/>
            <person name="Wong G.W."/>
        </authorList>
    </citation>
    <scope>PHOSPHORYLATION AT SER-612</scope>
</reference>
<reference key="16">
    <citation type="journal article" date="2015" name="J. Biol. Chem.">
        <title>Tumor necrosis factor (TNF)-alpha-induced repression of GKAP42 protein levels through cGMP-dependent kinase (cGK)-Ialpha causes insulin resistance in 3T3-L1 adipocytes.</title>
        <authorList>
            <person name="Ando Y."/>
            <person name="Shinozawa Y."/>
            <person name="Iijima Y."/>
            <person name="Yu B.C."/>
            <person name="Sone M."/>
            <person name="Ooi Y."/>
            <person name="Watanaka Y."/>
            <person name="Chida K."/>
            <person name="Hakuno F."/>
            <person name="Takahashi S."/>
        </authorList>
    </citation>
    <scope>INTERACTION WITH GKAP1</scope>
    <scope>PHOSPHORYLATION</scope>
</reference>
<reference key="17">
    <citation type="journal article" date="2016" name="Sci. Rep.">
        <title>A novel IRS-1-associated protein, DGKzeta regulates GLUT4 translocation in 3T3-L1 adipocytes.</title>
        <authorList>
            <person name="Liu T."/>
            <person name="Yu B."/>
            <person name="Kakino M."/>
            <person name="Fujimoto H."/>
            <person name="Ando Y."/>
            <person name="Hakuno F."/>
            <person name="Takahashi S.I."/>
        </authorList>
    </citation>
    <scope>INTERACTION WITH DGKZ</scope>
    <scope>IDENTIFICATION IN A COMPLEX WITH DGKZ AND PIP5K1A</scope>
</reference>
<organism>
    <name type="scientific">Mus musculus</name>
    <name type="common">Mouse</name>
    <dbReference type="NCBI Taxonomy" id="10090"/>
    <lineage>
        <taxon>Eukaryota</taxon>
        <taxon>Metazoa</taxon>
        <taxon>Chordata</taxon>
        <taxon>Craniata</taxon>
        <taxon>Vertebrata</taxon>
        <taxon>Euteleostomi</taxon>
        <taxon>Mammalia</taxon>
        <taxon>Eutheria</taxon>
        <taxon>Euarchontoglires</taxon>
        <taxon>Glires</taxon>
        <taxon>Rodentia</taxon>
        <taxon>Myomorpha</taxon>
        <taxon>Muroidea</taxon>
        <taxon>Muridae</taxon>
        <taxon>Murinae</taxon>
        <taxon>Mus</taxon>
        <taxon>Mus</taxon>
    </lineage>
</organism>
<feature type="chain" id="PRO_0000084237" description="Insulin receptor substrate 1">
    <location>
        <begin position="1"/>
        <end position="1233"/>
    </location>
</feature>
<feature type="domain" description="PH" evidence="4">
    <location>
        <begin position="12"/>
        <end position="115"/>
    </location>
</feature>
<feature type="domain" description="IRS-type PTB" evidence="5">
    <location>
        <begin position="155"/>
        <end position="259"/>
    </location>
</feature>
<feature type="region of interest" description="Mediates interaction with PHIP" evidence="1">
    <location>
        <begin position="3"/>
        <end position="133"/>
    </location>
</feature>
<feature type="region of interest" description="Disordered" evidence="6">
    <location>
        <begin position="257"/>
        <end position="425"/>
    </location>
</feature>
<feature type="region of interest" description="Disordered" evidence="6">
    <location>
        <begin position="651"/>
        <end position="720"/>
    </location>
</feature>
<feature type="region of interest" description="Disordered" evidence="6">
    <location>
        <begin position="766"/>
        <end position="985"/>
    </location>
</feature>
<feature type="region of interest" description="GRB2-binding" evidence="1">
    <location>
        <begin position="891"/>
        <end position="893"/>
    </location>
</feature>
<feature type="region of interest" description="Disordered" evidence="6">
    <location>
        <begin position="1015"/>
        <end position="1137"/>
    </location>
</feature>
<feature type="region of interest" description="Disordered" evidence="6">
    <location>
        <begin position="1178"/>
        <end position="1233"/>
    </location>
</feature>
<feature type="short sequence motif" description="YXXM motif 1">
    <location>
        <begin position="460"/>
        <end position="463"/>
    </location>
</feature>
<feature type="short sequence motif" description="YXXM motif 2">
    <location>
        <begin position="546"/>
        <end position="549"/>
    </location>
</feature>
<feature type="short sequence motif" description="YXXM motif 3">
    <location>
        <begin position="608"/>
        <end position="611"/>
    </location>
</feature>
<feature type="short sequence motif" description="YXXM motif 4">
    <location>
        <begin position="628"/>
        <end position="631"/>
    </location>
</feature>
<feature type="short sequence motif" description="YXXM motif 5">
    <location>
        <begin position="658"/>
        <end position="661"/>
    </location>
</feature>
<feature type="short sequence motif" description="YXXM motif 6">
    <location>
        <begin position="727"/>
        <end position="730"/>
    </location>
</feature>
<feature type="short sequence motif" description="YXXM motif 7">
    <location>
        <begin position="935"/>
        <end position="938"/>
    </location>
</feature>
<feature type="short sequence motif" description="YXXM motif 8">
    <location>
        <begin position="983"/>
        <end position="986"/>
    </location>
</feature>
<feature type="short sequence motif" description="YXXM motif 9">
    <location>
        <begin position="1006"/>
        <end position="1009"/>
    </location>
</feature>
<feature type="compositionally biased region" description="Low complexity" evidence="6">
    <location>
        <begin position="264"/>
        <end position="276"/>
    </location>
</feature>
<feature type="compositionally biased region" description="Basic residues" evidence="6">
    <location>
        <begin position="349"/>
        <end position="358"/>
    </location>
</feature>
<feature type="compositionally biased region" description="Low complexity" evidence="6">
    <location>
        <begin position="378"/>
        <end position="399"/>
    </location>
</feature>
<feature type="compositionally biased region" description="Low complexity" evidence="6">
    <location>
        <begin position="407"/>
        <end position="419"/>
    </location>
</feature>
<feature type="compositionally biased region" description="Low complexity" evidence="6">
    <location>
        <begin position="662"/>
        <end position="689"/>
    </location>
</feature>
<feature type="compositionally biased region" description="Basic and acidic residues" evidence="6">
    <location>
        <begin position="771"/>
        <end position="780"/>
    </location>
</feature>
<feature type="compositionally biased region" description="Low complexity" evidence="6">
    <location>
        <begin position="785"/>
        <end position="794"/>
    </location>
</feature>
<feature type="compositionally biased region" description="Low complexity" evidence="6">
    <location>
        <begin position="801"/>
        <end position="810"/>
    </location>
</feature>
<feature type="compositionally biased region" description="Low complexity" evidence="6">
    <location>
        <begin position="1032"/>
        <end position="1042"/>
    </location>
</feature>
<feature type="compositionally biased region" description="Polar residues" evidence="6">
    <location>
        <begin position="1043"/>
        <end position="1052"/>
    </location>
</feature>
<feature type="compositionally biased region" description="Polar residues" evidence="6">
    <location>
        <begin position="1069"/>
        <end position="1081"/>
    </location>
</feature>
<feature type="compositionally biased region" description="Gly residues" evidence="6">
    <location>
        <begin position="1116"/>
        <end position="1129"/>
    </location>
</feature>
<feature type="compositionally biased region" description="Polar residues" evidence="6">
    <location>
        <begin position="1203"/>
        <end position="1227"/>
    </location>
</feature>
<feature type="modified residue" description="Phosphoserine" evidence="3">
    <location>
        <position position="3"/>
    </location>
</feature>
<feature type="modified residue" description="Phosphoserine; by CK2" evidence="3">
    <location>
        <position position="99"/>
    </location>
</feature>
<feature type="modified residue" description="Phosphoserine; by RPS6KB1" evidence="2">
    <location>
        <position position="265"/>
    </location>
</feature>
<feature type="modified residue" description="Phosphoserine; by RPS6KB1" evidence="2">
    <location>
        <position position="302"/>
    </location>
</feature>
<feature type="modified residue" description="Phosphoserine; by IKKB, MAPK8 and RPS6KB1" evidence="2">
    <location>
        <position position="307"/>
    </location>
</feature>
<feature type="modified residue" description="Phosphoserine" evidence="2">
    <location>
        <position position="318"/>
    </location>
</feature>
<feature type="modified residue" description="Phosphoserine" evidence="22">
    <location>
        <position position="325"/>
    </location>
</feature>
<feature type="modified residue" description="Phosphoserine" evidence="21">
    <location>
        <position position="340"/>
    </location>
</feature>
<feature type="modified residue" description="Phosphoserine" evidence="2">
    <location>
        <position position="343"/>
    </location>
</feature>
<feature type="modified residue" description="Phosphoserine" evidence="22">
    <location>
        <position position="414"/>
    </location>
</feature>
<feature type="modified residue" description="Phosphothreonine" evidence="3">
    <location>
        <position position="441"/>
    </location>
</feature>
<feature type="modified residue" description="Phosphothreonine" evidence="2">
    <location>
        <position position="448"/>
    </location>
</feature>
<feature type="modified residue" description="Phosphotyrosine; by INSR" evidence="3">
    <location>
        <position position="460"/>
    </location>
</feature>
<feature type="modified residue" description="Phosphoserine; by RPS6KB1" evidence="2">
    <location>
        <position position="522"/>
    </location>
</feature>
<feature type="modified residue" description="Phosphotyrosine; by INSR" evidence="3">
    <location>
        <position position="608"/>
    </location>
</feature>
<feature type="modified residue" description="Phosphoserine" evidence="15">
    <location>
        <position position="612"/>
    </location>
</feature>
<feature type="modified residue" description="Phosphotyrosine; by INSR" evidence="3">
    <location>
        <position position="628"/>
    </location>
</feature>
<feature type="modified residue" description="Phosphoserine; by RPS6KB1 and ROCK2" evidence="20">
    <location>
        <position position="632"/>
    </location>
</feature>
<feature type="modified residue" description="Phosphotyrosine" evidence="2">
    <location>
        <position position="658"/>
    </location>
</feature>
<feature type="modified residue" description="Phosphoserine; by AMPK and SIK2" evidence="10">
    <location>
        <position position="789"/>
    </location>
</feature>
<feature type="modified residue" description="Phosphoserine" evidence="22">
    <location>
        <position position="887"/>
    </location>
</feature>
<feature type="modified residue" description="Phosphotyrosine; by INSR" evidence="3">
    <location>
        <position position="891"/>
    </location>
</feature>
<feature type="modified residue" description="Phosphotyrosine; by INSR" evidence="2">
    <location>
        <position position="935"/>
    </location>
</feature>
<feature type="modified residue" description="Phosphotyrosine; by INSR" evidence="3">
    <location>
        <position position="983"/>
    </location>
</feature>
<feature type="modified residue" description="Phosphoserine" evidence="22">
    <location>
        <position position="1096"/>
    </location>
</feature>
<feature type="modified residue" description="Phosphoserine" evidence="21 22">
    <location>
        <position position="1097"/>
    </location>
</feature>
<feature type="modified residue" description="Phosphotyrosine; by INSR" evidence="3">
    <location>
        <position position="1173"/>
    </location>
</feature>
<feature type="modified residue" description="Phosphotyrosine; by INSR" evidence="3">
    <location>
        <position position="1220"/>
    </location>
</feature>
<feature type="cross-link" description="Glycyl lysine isopeptide (Lys-Gly) (interchain with G-Cter in ubiquitin)" evidence="2">
    <location>
        <position position="1180"/>
    </location>
</feature>
<feature type="sequence conflict" description="In Ref. 2." evidence="19" ref="2">
    <location>
        <begin position="1038"/>
        <end position="1039"/>
    </location>
</feature>
<feature type="sequence conflict" description="In Ref. 2; CAA49378." evidence="19" ref="2">
    <original>H</original>
    <variation>R</variation>
    <location>
        <position position="1182"/>
    </location>
</feature>
<comment type="function">
    <text evidence="2 3 18">Signaling adapter protein that participates in the signal transduction from two prominent receptor tyrosine kinases, insulin receptor/INSR and insulin-like growth factor I receptor/IGF1R. Plays therefore an important role in development, growth, glucose homeostasis as well as lipid metabolism (PubMed:7526222). Upon phosphorylation by the insulin receptor, functions as a signaling scaffold that propagates insulin action through binding to SH2 domain-containing proteins including the p85 regulatory subunit of PI3K, NCK1, NCK2, GRB2 or SHP2 (By similarity). Recruitment of GRB2 leads to the activation of the guanine nucleotide exchange factor SOS1 which in turn triggers the Ras/Raf/MEK/MAPK signaling cascade (By similarity). Activation of the PI3K/AKT pathway is responsible for most of insulin metabolic effects in the cell, and the Ras/Raf/MEK/MAPK is involved in the regulation of gene expression and in cooperation with the PI3K pathway regulates cell growth and differentiation (By similarity). Acts a positive regulator of the Wnt/beta-catenin signaling pathway through suppression of DVL2 autophagy-mediated degradation leading to cell proliferation (By similarity).</text>
</comment>
<comment type="subunit">
    <text evidence="2 3 8 9 11 12 13 16 17">Interacts (via phosphorylated YXXM motifs) with PIK3R1 (By similarity). Interacts with ROCK1 (By similarity). Interacts with GRB2 (By similarity). Interacts with SOCS7 (By similarity). Interacts (via IRS-type PTB domain) with IGF1R and INSR (via the tyrosine-phosphorylated NPXY motif) (By similarity). Interacts with UBTF and PIK3CA (PubMed:15197263). Interacts (via PH domain) with PHIP (PubMed:11018022). Interacts with FER (PubMed:11006284). Interacts with ALK (By similarity). Interacts with EIF2AK2/PKR (PubMed:22948222). Interacts with GKAP1 (PubMed:25586176). Interacts with DGKZ in the absence of insulin; insulin stimulation decreases this interaction (PubMed:27739494). Found in a ternary complex with DGKZ and PIP5K1A in the absence of insulin stimulation (PubMed:27739494). Interacts with SQSTM1; the interaction is disrupted by the presence of tensin TNS2 (By similarity). Interacts with NCK1 (via SH2 domain). Interacts with NCK2 (via SH3 domain) (By similarity). Interacts with SH2B1; this interaction enhances leptin-induced activation of the PI3-kinase pathway (PubMed:15316008). Interacts with DVL2; this interaction promotes the Wnt/beta-catenin signaling pathway (By similarity).</text>
</comment>
<comment type="interaction">
    <interactant intactId="EBI-400825">
        <id>P35569</id>
    </interactant>
    <interactant intactId="EBI-2603444">
        <id>Q03963</id>
        <label>Eif2ak2</label>
    </interactant>
    <organismsDiffer>false</organismsDiffer>
    <experiments>2</experiments>
</comment>
<comment type="interaction">
    <interactant intactId="EBI-400825">
        <id>P35569</id>
    </interactant>
    <interactant intactId="EBI-641764">
        <id>P26450</id>
        <label>Pik3r1</label>
    </interactant>
    <organismsDiffer>false</organismsDiffer>
    <experiments>3</experiments>
</comment>
<comment type="interaction">
    <interactant intactId="EBI-400825">
        <id>P35569</id>
    </interactant>
    <interactant intactId="EBI-16034016">
        <id>Q1XH17</id>
        <label>Trim72</label>
    </interactant>
    <organismsDiffer>false</organismsDiffer>
    <experiments>4</experiments>
</comment>
<comment type="interaction">
    <interactant intactId="EBI-400825">
        <id>P35569</id>
    </interactant>
    <interactant intactId="EBI-287091">
        <id>Q13625-2</id>
        <label>TP53BP2</label>
    </interactant>
    <organismsDiffer>true</organismsDiffer>
    <experiments>2</experiments>
</comment>
<comment type="subcellular location">
    <subcellularLocation>
        <location evidence="2">Cytoplasm</location>
    </subcellularLocation>
    <subcellularLocation>
        <location evidence="2">Nucleus</location>
    </subcellularLocation>
    <text evidence="2">Nuclear or cytoplasmic localization of IRS1 correlates with the transition from proliferation to chondrogenic differentiation.</text>
</comment>
<comment type="tissue specificity">
    <text evidence="7">Expressed in osteoblasts, but not in osteoclasts.</text>
</comment>
<comment type="PTM">
    <text evidence="2 3 16">Serine phosphorylation of IRS1 is a mechanism for insulin resistance. Ser-307 phosphorylation inhibits insulin action through disruption of IRS1 interaction with the insulin receptor (By similarity). Phosphorylation of Tyr-891 is required for GRB2-binding (By similarity). Phosphorylated by ALK. Phosphorylated at Ser-265, Ser-302, Ser-632 and Ser-1097 by RPS6KB1; phosphorylation induces accelerated degradation of IRS1 (By similarity). Phosphorylated on tyrosine residues in response to insulin (PubMed:25586176). In skeletal muscles, dephosphorylated on Tyr-608 by TNS2 under anabolic conditions; dephosphorylation results in the proteasomal degradation of IRS1 (By similarity).</text>
</comment>
<comment type="PTM">
    <text evidence="2 14">Ubiquitinated by the Cul7-RING(FBXW8) complex in a mTOR-dependent manner, leading to its degradation: the Cul7-RING(FBXW8) complex recognizes and binds IRS1 previously phosphorylated by S6 kinase (RPS6KB1 or RPS6KB2) (PubMed:23142081). Ubiquitinated by TRAF4 through 'Lys-29' linkage; this ubiquitination regulates the interaction of IRS1 with IGFR and IRS1 tyrosine phosphorylation upon IGF1 stimulation (By similarity).</text>
</comment>
<comment type="PTM">
    <text evidence="2">S-nitrosylation at by BLVRB inhibits its activity.</text>
</comment>
<comment type="disruption phenotype">
    <text evidence="18">IRS1 deletion mice show impaired intrauterine growth, resistance to insulin and insulin-like growth factor-I/IGF1, and abnormal glucose tolerance.</text>
</comment>
<gene>
    <name type="primary">Irs1</name>
    <name type="synonym">Irs-1</name>
</gene>
<name>IRS1_MOUSE</name>
<dbReference type="EMBL" id="L24563">
    <property type="protein sequence ID" value="AAA39335.1"/>
    <property type="molecule type" value="mRNA"/>
</dbReference>
<dbReference type="EMBL" id="X69722">
    <property type="protein sequence ID" value="CAA49378.1"/>
    <property type="molecule type" value="mRNA"/>
</dbReference>
<dbReference type="PIR" id="S30185">
    <property type="entry name" value="S30185"/>
</dbReference>
<dbReference type="RefSeq" id="NP_034700.2">
    <property type="nucleotide sequence ID" value="NM_010570.4"/>
</dbReference>
<dbReference type="PDB" id="1AYB">
    <property type="method" value="X-ray"/>
    <property type="resolution" value="3.00 A"/>
    <property type="chains" value="P=887-898"/>
</dbReference>
<dbReference type="PDB" id="5AXI">
    <property type="method" value="X-ray"/>
    <property type="resolution" value="2.50 A"/>
    <property type="chains" value="E=606-610"/>
</dbReference>
<dbReference type="PDBsum" id="1AYB"/>
<dbReference type="PDBsum" id="5AXI"/>
<dbReference type="BMRB" id="P35569"/>
<dbReference type="SMR" id="P35569"/>
<dbReference type="BioGRID" id="200788">
    <property type="interactions" value="22"/>
</dbReference>
<dbReference type="DIP" id="DIP-32456N"/>
<dbReference type="FunCoup" id="P35569">
    <property type="interactions" value="1612"/>
</dbReference>
<dbReference type="IntAct" id="P35569">
    <property type="interactions" value="51"/>
</dbReference>
<dbReference type="MINT" id="P35569"/>
<dbReference type="STRING" id="10090.ENSMUSP00000063795"/>
<dbReference type="GlyGen" id="P35569">
    <property type="glycosylation" value="6 sites, 2 N-linked glycans (2 sites), 1 O-linked glycan (2 sites)"/>
</dbReference>
<dbReference type="iPTMnet" id="P35569"/>
<dbReference type="PhosphoSitePlus" id="P35569"/>
<dbReference type="SwissPalm" id="P35569"/>
<dbReference type="jPOST" id="P35569"/>
<dbReference type="PaxDb" id="10090-ENSMUSP00000063795"/>
<dbReference type="PeptideAtlas" id="P35569"/>
<dbReference type="ProteomicsDB" id="269333"/>
<dbReference type="Pumba" id="P35569"/>
<dbReference type="DNASU" id="16367"/>
<dbReference type="GeneID" id="16367"/>
<dbReference type="KEGG" id="mmu:16367"/>
<dbReference type="AGR" id="MGI:99454"/>
<dbReference type="CTD" id="3667"/>
<dbReference type="MGI" id="MGI:99454">
    <property type="gene designation" value="Irs1"/>
</dbReference>
<dbReference type="eggNOG" id="ENOG502QUNU">
    <property type="taxonomic scope" value="Eukaryota"/>
</dbReference>
<dbReference type="InParanoid" id="P35569"/>
<dbReference type="OrthoDB" id="946068at2759"/>
<dbReference type="PhylomeDB" id="P35569"/>
<dbReference type="Reactome" id="R-MMU-109704">
    <property type="pathway name" value="PI3K Cascade"/>
</dbReference>
<dbReference type="Reactome" id="R-MMU-112399">
    <property type="pathway name" value="IRS-mediated signalling"/>
</dbReference>
<dbReference type="Reactome" id="R-MMU-112412">
    <property type="pathway name" value="SOS-mediated signalling"/>
</dbReference>
<dbReference type="Reactome" id="R-MMU-1257604">
    <property type="pathway name" value="PIP3 activates AKT signaling"/>
</dbReference>
<dbReference type="Reactome" id="R-MMU-1266695">
    <property type="pathway name" value="Interleukin-7 signaling"/>
</dbReference>
<dbReference type="Reactome" id="R-MMU-198203">
    <property type="pathway name" value="PI3K/AKT activation"/>
</dbReference>
<dbReference type="Reactome" id="R-MMU-201556">
    <property type="pathway name" value="Signaling by ALK"/>
</dbReference>
<dbReference type="Reactome" id="R-MMU-2428928">
    <property type="pathway name" value="IRS-related events triggered by IGF1R"/>
</dbReference>
<dbReference type="Reactome" id="R-MMU-5673001">
    <property type="pathway name" value="RAF/MAP kinase cascade"/>
</dbReference>
<dbReference type="Reactome" id="R-MMU-6811558">
    <property type="pathway name" value="PI5P, PP2A and IER3 Regulate PI3K/AKT Signaling"/>
</dbReference>
<dbReference type="Reactome" id="R-MMU-74713">
    <property type="pathway name" value="IRS activation"/>
</dbReference>
<dbReference type="Reactome" id="R-MMU-74749">
    <property type="pathway name" value="Signal attenuation"/>
</dbReference>
<dbReference type="Reactome" id="R-MMU-9842663">
    <property type="pathway name" value="Signaling by LTK"/>
</dbReference>
<dbReference type="BioGRID-ORCS" id="16367">
    <property type="hits" value="6 hits in 76 CRISPR screens"/>
</dbReference>
<dbReference type="ChiTaRS" id="Irs1">
    <property type="organism name" value="mouse"/>
</dbReference>
<dbReference type="EvolutionaryTrace" id="P35569"/>
<dbReference type="PRO" id="PR:P35569"/>
<dbReference type="Proteomes" id="UP000000589">
    <property type="component" value="Unplaced"/>
</dbReference>
<dbReference type="RNAct" id="P35569">
    <property type="molecule type" value="protein"/>
</dbReference>
<dbReference type="GO" id="GO:0036064">
    <property type="term" value="C:ciliary basal body"/>
    <property type="evidence" value="ECO:0000314"/>
    <property type="project" value="MGI"/>
</dbReference>
<dbReference type="GO" id="GO:0005737">
    <property type="term" value="C:cytoplasm"/>
    <property type="evidence" value="ECO:0000314"/>
    <property type="project" value="MGI"/>
</dbReference>
<dbReference type="GO" id="GO:0005829">
    <property type="term" value="C:cytosol"/>
    <property type="evidence" value="ECO:0000304"/>
    <property type="project" value="Reactome"/>
</dbReference>
<dbReference type="GO" id="GO:0005634">
    <property type="term" value="C:nucleus"/>
    <property type="evidence" value="ECO:0000314"/>
    <property type="project" value="MGI"/>
</dbReference>
<dbReference type="GO" id="GO:0005886">
    <property type="term" value="C:plasma membrane"/>
    <property type="evidence" value="ECO:0000314"/>
    <property type="project" value="MGI"/>
</dbReference>
<dbReference type="GO" id="GO:0005158">
    <property type="term" value="F:insulin receptor binding"/>
    <property type="evidence" value="ECO:0000250"/>
    <property type="project" value="UniProtKB"/>
</dbReference>
<dbReference type="GO" id="GO:0005159">
    <property type="term" value="F:insulin-like growth factor receptor binding"/>
    <property type="evidence" value="ECO:0000250"/>
    <property type="project" value="UniProtKB"/>
</dbReference>
<dbReference type="GO" id="GO:0141038">
    <property type="term" value="F:phosphatidylinositol 3-kinase activator activity"/>
    <property type="evidence" value="ECO:0000315"/>
    <property type="project" value="MGI"/>
</dbReference>
<dbReference type="GO" id="GO:0043548">
    <property type="term" value="F:phosphatidylinositol 3-kinase binding"/>
    <property type="evidence" value="ECO:0000314"/>
    <property type="project" value="MGI"/>
</dbReference>
<dbReference type="GO" id="GO:0019901">
    <property type="term" value="F:protein kinase binding"/>
    <property type="evidence" value="ECO:0000314"/>
    <property type="project" value="MGI"/>
</dbReference>
<dbReference type="GO" id="GO:0030674">
    <property type="term" value="F:protein-macromolecule adaptor activity"/>
    <property type="evidence" value="ECO:0000314"/>
    <property type="project" value="MGI"/>
</dbReference>
<dbReference type="GO" id="GO:0042169">
    <property type="term" value="F:SH2 domain binding"/>
    <property type="evidence" value="ECO:0000250"/>
    <property type="project" value="UniProtKB"/>
</dbReference>
<dbReference type="GO" id="GO:0005068">
    <property type="term" value="F:transmembrane receptor protein tyrosine kinase adaptor activity"/>
    <property type="evidence" value="ECO:0000314"/>
    <property type="project" value="MGI"/>
</dbReference>
<dbReference type="GO" id="GO:0016477">
    <property type="term" value="P:cell migration"/>
    <property type="evidence" value="ECO:0000316"/>
    <property type="project" value="MGI"/>
</dbReference>
<dbReference type="GO" id="GO:0071398">
    <property type="term" value="P:cellular response to fatty acid"/>
    <property type="evidence" value="ECO:0000315"/>
    <property type="project" value="ARUK-UCL"/>
</dbReference>
<dbReference type="GO" id="GO:0032869">
    <property type="term" value="P:cellular response to insulin stimulus"/>
    <property type="evidence" value="ECO:0000314"/>
    <property type="project" value="MGI"/>
</dbReference>
<dbReference type="GO" id="GO:0010631">
    <property type="term" value="P:epithelial cell migration"/>
    <property type="evidence" value="ECO:0000316"/>
    <property type="project" value="MGI"/>
</dbReference>
<dbReference type="GO" id="GO:0008286">
    <property type="term" value="P:insulin receptor signaling pathway"/>
    <property type="evidence" value="ECO:0000314"/>
    <property type="project" value="MGI"/>
</dbReference>
<dbReference type="GO" id="GO:0048009">
    <property type="term" value="P:insulin-like growth factor receptor signaling pathway"/>
    <property type="evidence" value="ECO:0000314"/>
    <property type="project" value="MGI"/>
</dbReference>
<dbReference type="GO" id="GO:0016042">
    <property type="term" value="P:lipid catabolic process"/>
    <property type="evidence" value="ECO:0000315"/>
    <property type="project" value="MGI"/>
</dbReference>
<dbReference type="GO" id="GO:0030879">
    <property type="term" value="P:mammary gland development"/>
    <property type="evidence" value="ECO:0000316"/>
    <property type="project" value="MGI"/>
</dbReference>
<dbReference type="GO" id="GO:0010634">
    <property type="term" value="P:positive regulation of epithelial cell migration"/>
    <property type="evidence" value="ECO:0000316"/>
    <property type="project" value="MGI"/>
</dbReference>
<dbReference type="GO" id="GO:0002053">
    <property type="term" value="P:positive regulation of mesenchymal cell proliferation"/>
    <property type="evidence" value="ECO:0000316"/>
    <property type="project" value="MGI"/>
</dbReference>
<dbReference type="GO" id="GO:0051897">
    <property type="term" value="P:positive regulation of phosphatidylinositol 3-kinase/protein kinase B signal transduction"/>
    <property type="evidence" value="ECO:0000315"/>
    <property type="project" value="MGI"/>
</dbReference>
<dbReference type="GO" id="GO:0034504">
    <property type="term" value="P:protein localization to nucleus"/>
    <property type="evidence" value="ECO:0000314"/>
    <property type="project" value="MGI"/>
</dbReference>
<dbReference type="GO" id="GO:0010468">
    <property type="term" value="P:regulation of gene expression"/>
    <property type="evidence" value="ECO:0000315"/>
    <property type="project" value="MGI"/>
</dbReference>
<dbReference type="CDD" id="cd01257">
    <property type="entry name" value="PH_IRS"/>
    <property type="match status" value="1"/>
</dbReference>
<dbReference type="CDD" id="cd01204">
    <property type="entry name" value="PTB_IRS"/>
    <property type="match status" value="1"/>
</dbReference>
<dbReference type="FunFam" id="2.30.29.30:FF:000029">
    <property type="entry name" value="Insulin receptor substrate 1"/>
    <property type="match status" value="1"/>
</dbReference>
<dbReference type="FunFam" id="2.30.29.30:FF:000129">
    <property type="entry name" value="Insulin receptor substrate 1"/>
    <property type="match status" value="1"/>
</dbReference>
<dbReference type="Gene3D" id="2.30.29.30">
    <property type="entry name" value="Pleckstrin-homology domain (PH domain)/Phosphotyrosine-binding domain (PTB)"/>
    <property type="match status" value="2"/>
</dbReference>
<dbReference type="InterPro" id="IPR039011">
    <property type="entry name" value="IRS"/>
</dbReference>
<dbReference type="InterPro" id="IPR002404">
    <property type="entry name" value="IRS_PTB"/>
</dbReference>
<dbReference type="InterPro" id="IPR011993">
    <property type="entry name" value="PH-like_dom_sf"/>
</dbReference>
<dbReference type="InterPro" id="IPR001849">
    <property type="entry name" value="PH_domain"/>
</dbReference>
<dbReference type="PANTHER" id="PTHR10614">
    <property type="entry name" value="INSULIN RECEPTOR SUBSTRATE"/>
    <property type="match status" value="1"/>
</dbReference>
<dbReference type="PANTHER" id="PTHR10614:SF11">
    <property type="entry name" value="INSULIN RECEPTOR SUBSTRATE 1"/>
    <property type="match status" value="1"/>
</dbReference>
<dbReference type="Pfam" id="PF02174">
    <property type="entry name" value="IRS"/>
    <property type="match status" value="1"/>
</dbReference>
<dbReference type="Pfam" id="PF00169">
    <property type="entry name" value="PH"/>
    <property type="match status" value="1"/>
</dbReference>
<dbReference type="PRINTS" id="PR00628">
    <property type="entry name" value="INSULINRSI"/>
</dbReference>
<dbReference type="SMART" id="SM01244">
    <property type="entry name" value="IRS"/>
    <property type="match status" value="1"/>
</dbReference>
<dbReference type="SMART" id="SM00233">
    <property type="entry name" value="PH"/>
    <property type="match status" value="1"/>
</dbReference>
<dbReference type="SMART" id="SM00310">
    <property type="entry name" value="PTBI"/>
    <property type="match status" value="1"/>
</dbReference>
<dbReference type="SUPFAM" id="SSF50729">
    <property type="entry name" value="PH domain-like"/>
    <property type="match status" value="2"/>
</dbReference>
<dbReference type="PROSITE" id="PS51064">
    <property type="entry name" value="IRS_PTB"/>
    <property type="match status" value="1"/>
</dbReference>
<dbReference type="PROSITE" id="PS50003">
    <property type="entry name" value="PH_DOMAIN"/>
    <property type="match status" value="1"/>
</dbReference>
<keyword id="KW-0002">3D-structure</keyword>
<keyword id="KW-0963">Cytoplasm</keyword>
<keyword id="KW-1017">Isopeptide bond</keyword>
<keyword id="KW-0539">Nucleus</keyword>
<keyword id="KW-0597">Phosphoprotein</keyword>
<keyword id="KW-1185">Reference proteome</keyword>
<keyword id="KW-0677">Repeat</keyword>
<keyword id="KW-0702">S-nitrosylation</keyword>
<keyword id="KW-0807">Transducer</keyword>
<keyword id="KW-0832">Ubl conjugation</keyword>
<proteinExistence type="evidence at protein level"/>
<protein>
    <recommendedName>
        <fullName>Insulin receptor substrate 1</fullName>
        <shortName>IRS-1</shortName>
    </recommendedName>
</protein>